<feature type="chain" id="PRO_0000325647" description="Uroporphyrinogen decarboxylase">
    <location>
        <begin position="1"/>
        <end position="345"/>
    </location>
</feature>
<feature type="binding site" evidence="1">
    <location>
        <begin position="27"/>
        <end position="31"/>
    </location>
    <ligand>
        <name>substrate</name>
    </ligand>
</feature>
<feature type="binding site" evidence="1">
    <location>
        <position position="46"/>
    </location>
    <ligand>
        <name>substrate</name>
    </ligand>
</feature>
<feature type="binding site" evidence="1">
    <location>
        <position position="76"/>
    </location>
    <ligand>
        <name>substrate</name>
    </ligand>
</feature>
<feature type="binding site" evidence="1">
    <location>
        <position position="152"/>
    </location>
    <ligand>
        <name>substrate</name>
    </ligand>
</feature>
<feature type="binding site" evidence="1">
    <location>
        <position position="207"/>
    </location>
    <ligand>
        <name>substrate</name>
    </ligand>
</feature>
<feature type="binding site" evidence="1">
    <location>
        <position position="320"/>
    </location>
    <ligand>
        <name>substrate</name>
    </ligand>
</feature>
<feature type="site" description="Transition state stabilizer" evidence="1">
    <location>
        <position position="76"/>
    </location>
</feature>
<gene>
    <name evidence="1" type="primary">hemE</name>
    <name type="ordered locus">GK0661</name>
</gene>
<keyword id="KW-0963">Cytoplasm</keyword>
<keyword id="KW-0210">Decarboxylase</keyword>
<keyword id="KW-0456">Lyase</keyword>
<keyword id="KW-0627">Porphyrin biosynthesis</keyword>
<keyword id="KW-1185">Reference proteome</keyword>
<accession>Q5L284</accession>
<proteinExistence type="inferred from homology"/>
<organism>
    <name type="scientific">Geobacillus kaustophilus (strain HTA426)</name>
    <dbReference type="NCBI Taxonomy" id="235909"/>
    <lineage>
        <taxon>Bacteria</taxon>
        <taxon>Bacillati</taxon>
        <taxon>Bacillota</taxon>
        <taxon>Bacilli</taxon>
        <taxon>Bacillales</taxon>
        <taxon>Anoxybacillaceae</taxon>
        <taxon>Geobacillus</taxon>
        <taxon>Geobacillus thermoleovorans group</taxon>
    </lineage>
</organism>
<name>DCUP_GEOKA</name>
<comment type="function">
    <text evidence="1">Catalyzes the decarboxylation of four acetate groups of uroporphyrinogen-III to yield coproporphyrinogen-III.</text>
</comment>
<comment type="catalytic activity">
    <reaction evidence="1">
        <text>uroporphyrinogen III + 4 H(+) = coproporphyrinogen III + 4 CO2</text>
        <dbReference type="Rhea" id="RHEA:19865"/>
        <dbReference type="ChEBI" id="CHEBI:15378"/>
        <dbReference type="ChEBI" id="CHEBI:16526"/>
        <dbReference type="ChEBI" id="CHEBI:57308"/>
        <dbReference type="ChEBI" id="CHEBI:57309"/>
        <dbReference type="EC" id="4.1.1.37"/>
    </reaction>
</comment>
<comment type="pathway">
    <text evidence="1">Porphyrin-containing compound metabolism; protoporphyrin-IX biosynthesis; coproporphyrinogen-III from 5-aminolevulinate: step 4/4.</text>
</comment>
<comment type="subunit">
    <text evidence="1">Homodimer.</text>
</comment>
<comment type="subcellular location">
    <subcellularLocation>
        <location evidence="1">Cytoplasm</location>
    </subcellularLocation>
</comment>
<comment type="similarity">
    <text evidence="1">Belongs to the uroporphyrinogen decarboxylase family.</text>
</comment>
<comment type="sequence caution" evidence="2">
    <conflict type="erroneous initiation">
        <sequence resource="EMBL-CDS" id="BAD74946"/>
    </conflict>
</comment>
<dbReference type="EC" id="4.1.1.37" evidence="1"/>
<dbReference type="EMBL" id="BA000043">
    <property type="protein sequence ID" value="BAD74946.1"/>
    <property type="status" value="ALT_INIT"/>
    <property type="molecule type" value="Genomic_DNA"/>
</dbReference>
<dbReference type="RefSeq" id="WP_025038854.1">
    <property type="nucleotide sequence ID" value="NC_006510.1"/>
</dbReference>
<dbReference type="SMR" id="Q5L284"/>
<dbReference type="STRING" id="235909.GK0661"/>
<dbReference type="GeneID" id="32062608"/>
<dbReference type="KEGG" id="gka:GK0661"/>
<dbReference type="PATRIC" id="fig|235909.7.peg.738"/>
<dbReference type="eggNOG" id="COG0407">
    <property type="taxonomic scope" value="Bacteria"/>
</dbReference>
<dbReference type="HOGENOM" id="CLU_040933_0_1_9"/>
<dbReference type="UniPathway" id="UPA00251">
    <property type="reaction ID" value="UER00321"/>
</dbReference>
<dbReference type="Proteomes" id="UP000001172">
    <property type="component" value="Chromosome"/>
</dbReference>
<dbReference type="GO" id="GO:0005829">
    <property type="term" value="C:cytosol"/>
    <property type="evidence" value="ECO:0007669"/>
    <property type="project" value="TreeGrafter"/>
</dbReference>
<dbReference type="GO" id="GO:0004853">
    <property type="term" value="F:uroporphyrinogen decarboxylase activity"/>
    <property type="evidence" value="ECO:0007669"/>
    <property type="project" value="UniProtKB-UniRule"/>
</dbReference>
<dbReference type="GO" id="GO:0006782">
    <property type="term" value="P:protoporphyrinogen IX biosynthetic process"/>
    <property type="evidence" value="ECO:0007669"/>
    <property type="project" value="UniProtKB-UniRule"/>
</dbReference>
<dbReference type="CDD" id="cd00717">
    <property type="entry name" value="URO-D"/>
    <property type="match status" value="1"/>
</dbReference>
<dbReference type="FunFam" id="3.20.20.210:FF:000005">
    <property type="entry name" value="Uroporphyrinogen decarboxylase"/>
    <property type="match status" value="1"/>
</dbReference>
<dbReference type="Gene3D" id="3.20.20.210">
    <property type="match status" value="1"/>
</dbReference>
<dbReference type="HAMAP" id="MF_00218">
    <property type="entry name" value="URO_D"/>
    <property type="match status" value="1"/>
</dbReference>
<dbReference type="InterPro" id="IPR038071">
    <property type="entry name" value="UROD/MetE-like_sf"/>
</dbReference>
<dbReference type="InterPro" id="IPR006361">
    <property type="entry name" value="Uroporphyrinogen_deCO2ase_HemE"/>
</dbReference>
<dbReference type="InterPro" id="IPR000257">
    <property type="entry name" value="Uroporphyrinogen_deCOase"/>
</dbReference>
<dbReference type="NCBIfam" id="TIGR01464">
    <property type="entry name" value="hemE"/>
    <property type="match status" value="1"/>
</dbReference>
<dbReference type="PANTHER" id="PTHR21091">
    <property type="entry name" value="METHYLTETRAHYDROFOLATE:HOMOCYSTEINE METHYLTRANSFERASE RELATED"/>
    <property type="match status" value="1"/>
</dbReference>
<dbReference type="PANTHER" id="PTHR21091:SF169">
    <property type="entry name" value="UROPORPHYRINOGEN DECARBOXYLASE"/>
    <property type="match status" value="1"/>
</dbReference>
<dbReference type="Pfam" id="PF01208">
    <property type="entry name" value="URO-D"/>
    <property type="match status" value="1"/>
</dbReference>
<dbReference type="SUPFAM" id="SSF51726">
    <property type="entry name" value="UROD/MetE-like"/>
    <property type="match status" value="1"/>
</dbReference>
<dbReference type="PROSITE" id="PS00906">
    <property type="entry name" value="UROD_1"/>
    <property type="match status" value="1"/>
</dbReference>
<dbReference type="PROSITE" id="PS00907">
    <property type="entry name" value="UROD_2"/>
    <property type="match status" value="1"/>
</dbReference>
<reference key="1">
    <citation type="journal article" date="2004" name="Nucleic Acids Res.">
        <title>Thermoadaptation trait revealed by the genome sequence of thermophilic Geobacillus kaustophilus.</title>
        <authorList>
            <person name="Takami H."/>
            <person name="Takaki Y."/>
            <person name="Chee G.-J."/>
            <person name="Nishi S."/>
            <person name="Shimamura S."/>
            <person name="Suzuki H."/>
            <person name="Matsui S."/>
            <person name="Uchiyama I."/>
        </authorList>
    </citation>
    <scope>NUCLEOTIDE SEQUENCE [LARGE SCALE GENOMIC DNA]</scope>
    <source>
        <strain>HTA426</strain>
    </source>
</reference>
<evidence type="ECO:0000255" key="1">
    <source>
        <dbReference type="HAMAP-Rule" id="MF_00218"/>
    </source>
</evidence>
<evidence type="ECO:0000305" key="2"/>
<protein>
    <recommendedName>
        <fullName evidence="1">Uroporphyrinogen decarboxylase</fullName>
        <shortName evidence="1">UPD</shortName>
        <shortName evidence="1">URO-D</shortName>
        <ecNumber evidence="1">4.1.1.37</ecNumber>
    </recommendedName>
</protein>
<sequence>MARQINDTFLRACRGEQTSYVPVWYMRQAGRSQPEYRALKEKYSLFEITHQPELCAYVTRLPVEQYGVDAAILYKDIMTPLPAIGVNVEIQGGIGPVIANPIRSLQDVERLGEIDPEHDVPYVFETIRLLVNEQLDVPLIGFAGAPFTLASYMIEGGPSKNYHKTKAFMYAEPKAWFALMDKLAEMTIRYVRAQIRAGASAVQIFDSWVGAVSADDYRTFIKPAMARIFAALREEGAPLIMFGVGASHLVHEWNDLPLDVIGLDWRLSIREARRQGIAKAIQGNLDPAVLLAPWDVIEERVKRILDEGMERPGYIFNLGHGIFPDVQPATLKRLTAFIHEYTSTN</sequence>